<organism>
    <name type="scientific">Gibberella moniliformis (strain M3125 / FGSC 7600)</name>
    <name type="common">Maize ear and stalk rot fungus</name>
    <name type="synonym">Fusarium verticillioides</name>
    <dbReference type="NCBI Taxonomy" id="334819"/>
    <lineage>
        <taxon>Eukaryota</taxon>
        <taxon>Fungi</taxon>
        <taxon>Dikarya</taxon>
        <taxon>Ascomycota</taxon>
        <taxon>Pezizomycotina</taxon>
        <taxon>Sordariomycetes</taxon>
        <taxon>Hypocreomycetidae</taxon>
        <taxon>Hypocreales</taxon>
        <taxon>Nectriaceae</taxon>
        <taxon>Fusarium</taxon>
        <taxon>Fusarium fujikuroi species complex</taxon>
    </lineage>
</organism>
<sequence>MTIILHRSDFFEAILNHEGSSVAVVENESGASFCYSSLLNSVARAKEQLLAKTGKCDTSVSGERIAFLVESGYEYVVTLLTILACNAIAVPLAPSFPAPELRYIINNSEALALISSAKYVSKAEEVLAEGLDNTPLFCQLDGTRNISAIEEEVKLRDFSDEPRGGMMLFTSGTTARPKGVVLSQTNLTAQAKCLLEAWKYAPSDRLLHVLPLHHIHGTVNALLTPLLAGSSIEFMYPFNVNSVWTRLAAPFLENEQINGHSEKTNGAQKDETRVPISFFTAVPTIWSRMLKAHDSLSHDMQAAGKIAVSPNNLRLNISGSAALPKPIRDGWIQLTGGNVLLERYGMTEVGMALSCGLENTDRVDGSVGWPLPSVEARLMETDDETEIQRIIEHGAEIDAHSGKERIGEIQLRGPTVFTGYWRNPEATAKEFTTDGWFKTGDIAIRRQVPESGLGKSGSWAKGPAYFIQGRRSADIIKTGGEKVSALEVEREILALPEVDECAVVGLPSEAWGQKVAAVIVLSSKVGGSMSLQSLRSALKTRITAYKIPQDLEIVEFLPRNAMGKINKKELVKSVFGEVEKIRRRSIDLQTKRPVLNGQRG</sequence>
<comment type="function">
    <text evidence="3 4 5 6 10">CoA ligase; part of the Fusarium detoxification of benzoxazolinone cluster 2 (FDB2) involved in the degradation of benzoxazolinones produced by the host plant (PubMed:19302487, PubMed:26808652). Maize, wheat, and rye produce the 2 benzoxazinone phytoanticipins 2,4-dihy-droxy-7-methoxy-1,4-benzoxazin-3-one (DIMBOA) and 2,4-dihydroxy-1,4-benzoxazin-3-one (DIBOA) that, due to their inherent instability once released, spontaneously degrade to the more stable corresponding benzoxazolinones, 6-methoxy-2-benzoxazolinone (MBOA) and 2-benzoxazolinone (BOA), respectively (PubMed:11876429). The first step in the detoxification of benzoxazolinones involves the hydrolysis of the cyclic ester bond of benzoxazolinones by the FDB1 cluster gamma-lactamase MBL1 to aminophenols (PubMed:12788712, PubMed:26808652). MBL1 is able to convert BOA into 2-aminophenol (2-AP), as well as MBOA into 5-methoxy-2-aminophenol (2-AMP) (PubMed:12788712, PubMed:26808652). The FDB2 cluster N-malonyltransferase FDB2/NAT1 then metabolizes aminophenols via N-malonylation to non-toxic malonamic acids (PubMed:12788712, PubMed:19302487). FDB2/NAT1 converts 2-AP into N-(2-hydroxyphenyl) malonamic acid (HPMA) and 2-AMP into N-(2-hydroxy-4-methoxyphenyl) malonamic acid (HMPMA) (PubMed:12788712, PubMed:19302487). The duplicated dienlactone hydrolases DLH1 and DLH2 may provide redundant function for hydrolyzing the lactone moiety in the BOA molecule (Probable). The roles of the amidases an other enzymes encoded by the 2 FDB clusters have not been identified so far (Probable).</text>
</comment>
<comment type="induction">
    <text evidence="6">Expression is induced in response to 2-benzoxasolinone (BOA) exposure.</text>
</comment>
<comment type="domain">
    <text evidence="1">Both substrate-binding domains (SBD1 and SBD2) are involved in the substrate recognition, and are sufficient to confer the substrate specificity.</text>
</comment>
<comment type="disruption phenotype">
    <text evidence="5">Does not affect tolerance to 2-benzoxazolinone (BOA).</text>
</comment>
<comment type="miscellaneous">
    <text evidence="10">Fusarium verticillioides possesses 2 unlinked loci, FDB1 and FDB2, necessary for detoxification of antimicrobial compounds produced by maize, including 2-benzoxazolinone (BOA) (Probable). The FDB2 cluster arose as a duplication of the FDB1 cluster with rearrangement and expansion by incorporating additional genes (Probable).</text>
</comment>
<comment type="similarity">
    <text evidence="8">Belongs to the ATP-dependent AMP-binding enzyme family.</text>
</comment>
<gene>
    <name type="ORF">FVEG_12633</name>
</gene>
<name>FDB33_GIBM7</name>
<accession>W7NDP3</accession>
<feature type="chain" id="PRO_0000454623" description="CoA ligase FVEG_12633">
    <location>
        <begin position="1"/>
        <end position="600"/>
    </location>
</feature>
<feature type="region of interest" description="SBD1" evidence="1">
    <location>
        <begin position="241"/>
        <end position="342"/>
    </location>
</feature>
<feature type="region of interest" description="SBD2" evidence="1">
    <location>
        <begin position="343"/>
        <end position="420"/>
    </location>
</feature>
<feature type="binding site" evidence="2">
    <location>
        <begin position="170"/>
        <end position="174"/>
    </location>
    <ligand>
        <name>ATP</name>
        <dbReference type="ChEBI" id="CHEBI:30616"/>
    </ligand>
</feature>
<feature type="binding site" evidence="2">
    <location>
        <position position="214"/>
    </location>
    <ligand>
        <name>ATP</name>
        <dbReference type="ChEBI" id="CHEBI:30616"/>
    </ligand>
</feature>
<feature type="binding site" evidence="2">
    <location>
        <begin position="321"/>
        <end position="323"/>
    </location>
    <ligand>
        <name>ATP</name>
        <dbReference type="ChEBI" id="CHEBI:30616"/>
    </ligand>
</feature>
<feature type="binding site" evidence="2">
    <location>
        <begin position="342"/>
        <end position="343"/>
    </location>
    <ligand>
        <name>ATP</name>
        <dbReference type="ChEBI" id="CHEBI:30616"/>
    </ligand>
</feature>
<feature type="binding site" evidence="2">
    <location>
        <position position="346"/>
    </location>
    <ligand>
        <name>substrate</name>
    </ligand>
</feature>
<feature type="binding site" evidence="2">
    <location>
        <position position="347"/>
    </location>
    <ligand>
        <name>ATP</name>
        <dbReference type="ChEBI" id="CHEBI:30616"/>
    </ligand>
</feature>
<feature type="binding site" evidence="2">
    <location>
        <position position="441"/>
    </location>
    <ligand>
        <name>ATP</name>
        <dbReference type="ChEBI" id="CHEBI:30616"/>
    </ligand>
</feature>
<feature type="binding site" evidence="2">
    <location>
        <position position="471"/>
    </location>
    <ligand>
        <name>ATP</name>
        <dbReference type="ChEBI" id="CHEBI:30616"/>
    </ligand>
</feature>
<feature type="binding site" evidence="2">
    <location>
        <position position="564"/>
    </location>
    <ligand>
        <name>ATP</name>
        <dbReference type="ChEBI" id="CHEBI:30616"/>
    </ligand>
</feature>
<feature type="binding site" evidence="2">
    <location>
        <position position="564"/>
    </location>
    <ligand>
        <name>oxalate</name>
        <dbReference type="ChEBI" id="CHEBI:30623"/>
    </ligand>
</feature>
<proteinExistence type="evidence at transcript level"/>
<protein>
    <recommendedName>
        <fullName evidence="7">CoA ligase FVEG_12633</fullName>
        <ecNumber evidence="9">6.2.1.-</ecNumber>
    </recommendedName>
    <alternativeName>
        <fullName evidence="7">Fusarium detoxification of benzoxazolinone cluster 2 protein FVEG_12633</fullName>
        <shortName evidence="7">FDB2 cluster protein FVEG_12633</shortName>
    </alternativeName>
</protein>
<evidence type="ECO:0000250" key="1">
    <source>
        <dbReference type="UniProtKB" id="Q42524"/>
    </source>
</evidence>
<evidence type="ECO:0000250" key="2">
    <source>
        <dbReference type="UniProtKB" id="Q9SMT7"/>
    </source>
</evidence>
<evidence type="ECO:0000269" key="3">
    <source>
    </source>
</evidence>
<evidence type="ECO:0000269" key="4">
    <source>
    </source>
</evidence>
<evidence type="ECO:0000269" key="5">
    <source>
    </source>
</evidence>
<evidence type="ECO:0000269" key="6">
    <source>
    </source>
</evidence>
<evidence type="ECO:0000303" key="7">
    <source>
    </source>
</evidence>
<evidence type="ECO:0000305" key="8"/>
<evidence type="ECO:0000305" key="9">
    <source>
    </source>
</evidence>
<evidence type="ECO:0000305" key="10">
    <source>
    </source>
</evidence>
<dbReference type="EC" id="6.2.1.-" evidence="9"/>
<dbReference type="EMBL" id="CM000580">
    <property type="protein sequence ID" value="EWG54412.1"/>
    <property type="molecule type" value="Genomic_DNA"/>
</dbReference>
<dbReference type="RefSeq" id="XP_018760603.1">
    <property type="nucleotide sequence ID" value="XM_018901981.1"/>
</dbReference>
<dbReference type="SMR" id="W7NDP3"/>
<dbReference type="STRING" id="334819.W7NDP3"/>
<dbReference type="EnsemblFungi" id="FVEG_12633T0">
    <property type="protein sequence ID" value="FVEG_12633T0"/>
    <property type="gene ID" value="FVEG_12633"/>
</dbReference>
<dbReference type="GeneID" id="30070061"/>
<dbReference type="KEGG" id="fvr:FVEG_12633"/>
<dbReference type="VEuPathDB" id="FungiDB:FVEG_12633"/>
<dbReference type="eggNOG" id="KOG1176">
    <property type="taxonomic scope" value="Eukaryota"/>
</dbReference>
<dbReference type="HOGENOM" id="CLU_000022_59_11_1"/>
<dbReference type="OMA" id="PRITAYK"/>
<dbReference type="OrthoDB" id="61430at110618"/>
<dbReference type="Proteomes" id="UP000009096">
    <property type="component" value="Chromosome 3"/>
</dbReference>
<dbReference type="GO" id="GO:0005524">
    <property type="term" value="F:ATP binding"/>
    <property type="evidence" value="ECO:0007669"/>
    <property type="project" value="UniProtKB-KW"/>
</dbReference>
<dbReference type="GO" id="GO:0031956">
    <property type="term" value="F:medium-chain fatty acid-CoA ligase activity"/>
    <property type="evidence" value="ECO:0007669"/>
    <property type="project" value="TreeGrafter"/>
</dbReference>
<dbReference type="GO" id="GO:0006631">
    <property type="term" value="P:fatty acid metabolic process"/>
    <property type="evidence" value="ECO:0007669"/>
    <property type="project" value="TreeGrafter"/>
</dbReference>
<dbReference type="CDD" id="cd05941">
    <property type="entry name" value="MCS"/>
    <property type="match status" value="1"/>
</dbReference>
<dbReference type="Gene3D" id="3.30.300.30">
    <property type="match status" value="1"/>
</dbReference>
<dbReference type="Gene3D" id="3.40.50.12780">
    <property type="entry name" value="N-terminal domain of ligase-like"/>
    <property type="match status" value="1"/>
</dbReference>
<dbReference type="InterPro" id="IPR025110">
    <property type="entry name" value="AMP-bd_C"/>
</dbReference>
<dbReference type="InterPro" id="IPR045851">
    <property type="entry name" value="AMP-bd_C_sf"/>
</dbReference>
<dbReference type="InterPro" id="IPR000873">
    <property type="entry name" value="AMP-dep_synth/lig_dom"/>
</dbReference>
<dbReference type="InterPro" id="IPR042099">
    <property type="entry name" value="ANL_N_sf"/>
</dbReference>
<dbReference type="PANTHER" id="PTHR43201">
    <property type="entry name" value="ACYL-COA SYNTHETASE"/>
    <property type="match status" value="1"/>
</dbReference>
<dbReference type="PANTHER" id="PTHR43201:SF28">
    <property type="entry name" value="ENZYME, PUTATIVE (AFU_ORTHOLOGUE AFUA_7G01530)-RELATED"/>
    <property type="match status" value="1"/>
</dbReference>
<dbReference type="Pfam" id="PF00501">
    <property type="entry name" value="AMP-binding"/>
    <property type="match status" value="1"/>
</dbReference>
<dbReference type="Pfam" id="PF13193">
    <property type="entry name" value="AMP-binding_C"/>
    <property type="match status" value="1"/>
</dbReference>
<dbReference type="SUPFAM" id="SSF56801">
    <property type="entry name" value="Acetyl-CoA synthetase-like"/>
    <property type="match status" value="1"/>
</dbReference>
<keyword id="KW-0067">ATP-binding</keyword>
<keyword id="KW-0436">Ligase</keyword>
<keyword id="KW-0547">Nucleotide-binding</keyword>
<keyword id="KW-1185">Reference proteome</keyword>
<reference key="1">
    <citation type="journal article" date="2010" name="Nature">
        <title>Comparative genomics reveals mobile pathogenicity chromosomes in Fusarium.</title>
        <authorList>
            <person name="Ma L.-J."/>
            <person name="van der Does H.C."/>
            <person name="Borkovich K.A."/>
            <person name="Coleman J.J."/>
            <person name="Daboussi M.-J."/>
            <person name="Di Pietro A."/>
            <person name="Dufresne M."/>
            <person name="Freitag M."/>
            <person name="Grabherr M."/>
            <person name="Henrissat B."/>
            <person name="Houterman P.M."/>
            <person name="Kang S."/>
            <person name="Shim W.-B."/>
            <person name="Woloshuk C."/>
            <person name="Xie X."/>
            <person name="Xu J.-R."/>
            <person name="Antoniw J."/>
            <person name="Baker S.E."/>
            <person name="Bluhm B.H."/>
            <person name="Breakspear A."/>
            <person name="Brown D.W."/>
            <person name="Butchko R.A.E."/>
            <person name="Chapman S."/>
            <person name="Coulson R."/>
            <person name="Coutinho P.M."/>
            <person name="Danchin E.G.J."/>
            <person name="Diener A."/>
            <person name="Gale L.R."/>
            <person name="Gardiner D.M."/>
            <person name="Goff S."/>
            <person name="Hammond-Kosack K.E."/>
            <person name="Hilburn K."/>
            <person name="Hua-Van A."/>
            <person name="Jonkers W."/>
            <person name="Kazan K."/>
            <person name="Kodira C.D."/>
            <person name="Koehrsen M."/>
            <person name="Kumar L."/>
            <person name="Lee Y.-H."/>
            <person name="Li L."/>
            <person name="Manners J.M."/>
            <person name="Miranda-Saavedra D."/>
            <person name="Mukherjee M."/>
            <person name="Park G."/>
            <person name="Park J."/>
            <person name="Park S.-Y."/>
            <person name="Proctor R.H."/>
            <person name="Regev A."/>
            <person name="Ruiz-Roldan M.C."/>
            <person name="Sain D."/>
            <person name="Sakthikumar S."/>
            <person name="Sykes S."/>
            <person name="Schwartz D.C."/>
            <person name="Turgeon B.G."/>
            <person name="Wapinski I."/>
            <person name="Yoder O."/>
            <person name="Young S."/>
            <person name="Zeng Q."/>
            <person name="Zhou S."/>
            <person name="Galagan J."/>
            <person name="Cuomo C.A."/>
            <person name="Kistler H.C."/>
            <person name="Rep M."/>
        </authorList>
    </citation>
    <scope>NUCLEOTIDE SEQUENCE [LARGE SCALE GENOMIC DNA]</scope>
    <source>
        <strain>M3125 / FGSC 7600</strain>
    </source>
</reference>
<reference key="2">
    <citation type="journal article" date="2002" name="Mol. Plant Microbe Interact.">
        <title>Fdb1 and Fdb2, Fusarium verticillioides loci necessary for detoxification of preformed antimicrobials from corn.</title>
        <authorList>
            <person name="Glenn A.E."/>
            <person name="Gold S.E."/>
            <person name="Bacon C.W."/>
        </authorList>
    </citation>
    <scope>FUNCTION</scope>
</reference>
<reference key="3">
    <citation type="journal article" date="2003" name="Appl. Environ. Microbiol.">
        <title>Identification of intermediate and branch metabolites resulting from biotransformation of 2-benzoxazolinone by Fusarium verticillioides.</title>
        <authorList>
            <person name="Glenn A.E."/>
            <person name="Meredith F.I."/>
            <person name="Morrison W.H. III"/>
            <person name="Bacon C.W."/>
        </authorList>
    </citation>
    <scope>FUNCTION</scope>
</reference>
<reference key="4">
    <citation type="journal article" date="2009" name="J. Appl. Microbiol.">
        <title>FDB2 encodes a member of the arylamine N-acetyltransferase family and is necessary for biotransformation of benzoxazolinones by Fusarium verticillioides.</title>
        <authorList>
            <person name="Glenn A.E."/>
            <person name="Bacon C.W."/>
        </authorList>
    </citation>
    <scope>FUNCTION</scope>
    <scope>DISRUPTION PHENOTYPE</scope>
</reference>
<reference key="5">
    <citation type="journal article" date="2016" name="PLoS ONE">
        <title>Two horizontally transferred xenobiotic resistance gene clusters associated with detoxification of benzoxazolinones by Fusarium species.</title>
        <authorList>
            <person name="Glenn A.E."/>
            <person name="Davis C.B."/>
            <person name="Gao M."/>
            <person name="Gold S.E."/>
            <person name="Mitchell T.R."/>
            <person name="Proctor R.H."/>
            <person name="Stewart J.E."/>
            <person name="Snook M.E."/>
        </authorList>
    </citation>
    <scope>FUNCTION</scope>
    <scope>INDUCTION</scope>
</reference>